<sequence>KEKYRVVYTDHQRLELEKEFHCNRYITIRRKSELAVNLGLSERQVKSWFQNRRAKERKII</sequence>
<comment type="subcellular location">
    <subcellularLocation>
        <location evidence="2">Nucleus</location>
    </subcellularLocation>
</comment>
<comment type="developmental stage">
    <text>Expressed in late gastrulation and early neurulation.</text>
</comment>
<comment type="similarity">
    <text evidence="2">Belongs to the Caudal homeobox family.</text>
</comment>
<gene>
    <name type="primary">CHOX-CAD2</name>
</gene>
<organism>
    <name type="scientific">Gallus gallus</name>
    <name type="common">Chicken</name>
    <dbReference type="NCBI Taxonomy" id="9031"/>
    <lineage>
        <taxon>Eukaryota</taxon>
        <taxon>Metazoa</taxon>
        <taxon>Chordata</taxon>
        <taxon>Craniata</taxon>
        <taxon>Vertebrata</taxon>
        <taxon>Euteleostomi</taxon>
        <taxon>Archelosauria</taxon>
        <taxon>Archosauria</taxon>
        <taxon>Dinosauria</taxon>
        <taxon>Saurischia</taxon>
        <taxon>Theropoda</taxon>
        <taxon>Coelurosauria</taxon>
        <taxon>Aves</taxon>
        <taxon>Neognathae</taxon>
        <taxon>Galloanserae</taxon>
        <taxon>Galliformes</taxon>
        <taxon>Phasianidae</taxon>
        <taxon>Phasianinae</taxon>
        <taxon>Gallus</taxon>
    </lineage>
</organism>
<proteinExistence type="evidence at transcript level"/>
<keyword id="KW-0217">Developmental protein</keyword>
<keyword id="KW-0238">DNA-binding</keyword>
<keyword id="KW-0371">Homeobox</keyword>
<keyword id="KW-0539">Nucleus</keyword>
<keyword id="KW-1185">Reference proteome</keyword>
<name>HMD2_CHICK</name>
<evidence type="ECO:0000255" key="1">
    <source>
        <dbReference type="PROSITE-ProRule" id="PRU00108"/>
    </source>
</evidence>
<evidence type="ECO:0000305" key="2"/>
<protein>
    <recommendedName>
        <fullName>Homeobox protein CHOX-CAD2</fullName>
    </recommendedName>
</protein>
<accession>Q02814</accession>
<dbReference type="EMBL" id="L06621">
    <property type="protein sequence ID" value="AAA48999.1"/>
    <property type="molecule type" value="mRNA"/>
</dbReference>
<dbReference type="PIR" id="PC1228">
    <property type="entry name" value="PC1228"/>
</dbReference>
<dbReference type="SMR" id="Q02814"/>
<dbReference type="FunCoup" id="Q02814">
    <property type="interactions" value="289"/>
</dbReference>
<dbReference type="STRING" id="9031.ENSGALP00000012387"/>
<dbReference type="PaxDb" id="9031-ENSGALP00000012387"/>
<dbReference type="VEuPathDB" id="HostDB:geneid_374205"/>
<dbReference type="eggNOG" id="KOG0848">
    <property type="taxonomic scope" value="Eukaryota"/>
</dbReference>
<dbReference type="InParanoid" id="Q02814"/>
<dbReference type="Proteomes" id="UP000000539">
    <property type="component" value="Unassembled WGS sequence"/>
</dbReference>
<dbReference type="GO" id="GO:0005634">
    <property type="term" value="C:nucleus"/>
    <property type="evidence" value="ECO:0007669"/>
    <property type="project" value="UniProtKB-SubCell"/>
</dbReference>
<dbReference type="GO" id="GO:0003677">
    <property type="term" value="F:DNA binding"/>
    <property type="evidence" value="ECO:0007669"/>
    <property type="project" value="UniProtKB-KW"/>
</dbReference>
<dbReference type="GO" id="GO:0000981">
    <property type="term" value="F:DNA-binding transcription factor activity, RNA polymerase II-specific"/>
    <property type="evidence" value="ECO:0007669"/>
    <property type="project" value="InterPro"/>
</dbReference>
<dbReference type="CDD" id="cd00086">
    <property type="entry name" value="homeodomain"/>
    <property type="match status" value="1"/>
</dbReference>
<dbReference type="FunFam" id="1.10.10.60:FF:000574">
    <property type="entry name" value="Homeobox protein CHOX-CAD2"/>
    <property type="match status" value="1"/>
</dbReference>
<dbReference type="Gene3D" id="1.10.10.60">
    <property type="entry name" value="Homeodomain-like"/>
    <property type="match status" value="1"/>
</dbReference>
<dbReference type="InterPro" id="IPR047152">
    <property type="entry name" value="Caudal_homeobox"/>
</dbReference>
<dbReference type="InterPro" id="IPR001356">
    <property type="entry name" value="HD"/>
</dbReference>
<dbReference type="InterPro" id="IPR020479">
    <property type="entry name" value="HD_metazoa"/>
</dbReference>
<dbReference type="InterPro" id="IPR017970">
    <property type="entry name" value="Homeobox_CS"/>
</dbReference>
<dbReference type="InterPro" id="IPR009057">
    <property type="entry name" value="Homeodomain-like_sf"/>
</dbReference>
<dbReference type="InterPro" id="IPR000047">
    <property type="entry name" value="HTH_motif"/>
</dbReference>
<dbReference type="PANTHER" id="PTHR24332">
    <property type="entry name" value="HOMEOBOX PROTEIN CDX"/>
    <property type="match status" value="1"/>
</dbReference>
<dbReference type="PANTHER" id="PTHR24332:SF15">
    <property type="entry name" value="HOMEOBOX PROTEIN CDX-4"/>
    <property type="match status" value="1"/>
</dbReference>
<dbReference type="Pfam" id="PF00046">
    <property type="entry name" value="Homeodomain"/>
    <property type="match status" value="1"/>
</dbReference>
<dbReference type="PRINTS" id="PR00024">
    <property type="entry name" value="HOMEOBOX"/>
</dbReference>
<dbReference type="PRINTS" id="PR00031">
    <property type="entry name" value="HTHREPRESSR"/>
</dbReference>
<dbReference type="SMART" id="SM00389">
    <property type="entry name" value="HOX"/>
    <property type="match status" value="1"/>
</dbReference>
<dbReference type="SUPFAM" id="SSF46689">
    <property type="entry name" value="Homeodomain-like"/>
    <property type="match status" value="1"/>
</dbReference>
<dbReference type="PROSITE" id="PS00027">
    <property type="entry name" value="HOMEOBOX_1"/>
    <property type="match status" value="1"/>
</dbReference>
<dbReference type="PROSITE" id="PS50071">
    <property type="entry name" value="HOMEOBOX_2"/>
    <property type="match status" value="1"/>
</dbReference>
<reference key="1">
    <citation type="journal article" date="1993" name="Biochem. Biophys. Res. Commun.">
        <title>A novel chicken homeobox-containing gene expressed in neurulating embryos.</title>
        <authorList>
            <person name="Serrano J."/>
            <person name="Scavo L."/>
            <person name="Roth J."/>
            <person name="la Rosa E.J."/>
            <person name="de Pablo F."/>
        </authorList>
    </citation>
    <scope>NUCLEOTIDE SEQUENCE [MRNA]</scope>
    <source>
        <strain>White leghorn</strain>
        <tissue>Embryo</tissue>
    </source>
</reference>
<feature type="chain" id="PRO_0000049019" description="Homeobox protein CHOX-CAD2">
    <location>
        <begin position="1" status="less than"/>
        <end position="60" status="greater than"/>
    </location>
</feature>
<feature type="DNA-binding region" description="Homeobox" evidence="1">
    <location>
        <begin position="1"/>
        <end position="60"/>
    </location>
</feature>
<feature type="non-terminal residue">
    <location>
        <position position="1"/>
    </location>
</feature>
<feature type="non-terminal residue">
    <location>
        <position position="60"/>
    </location>
</feature>